<reference key="1">
    <citation type="journal article" date="1997" name="Nature">
        <title>The nucleotide sequence of Saccharomyces cerevisiae chromosome IV.</title>
        <authorList>
            <person name="Jacq C."/>
            <person name="Alt-Moerbe J."/>
            <person name="Andre B."/>
            <person name="Arnold W."/>
            <person name="Bahr A."/>
            <person name="Ballesta J.P.G."/>
            <person name="Bargues M."/>
            <person name="Baron L."/>
            <person name="Becker A."/>
            <person name="Biteau N."/>
            <person name="Bloecker H."/>
            <person name="Blugeon C."/>
            <person name="Boskovic J."/>
            <person name="Brandt P."/>
            <person name="Brueckner M."/>
            <person name="Buitrago M.J."/>
            <person name="Coster F."/>
            <person name="Delaveau T."/>
            <person name="del Rey F."/>
            <person name="Dujon B."/>
            <person name="Eide L.G."/>
            <person name="Garcia-Cantalejo J.M."/>
            <person name="Goffeau A."/>
            <person name="Gomez-Peris A."/>
            <person name="Granotier C."/>
            <person name="Hanemann V."/>
            <person name="Hankeln T."/>
            <person name="Hoheisel J.D."/>
            <person name="Jaeger W."/>
            <person name="Jimenez A."/>
            <person name="Jonniaux J.-L."/>
            <person name="Kraemer C."/>
            <person name="Kuester H."/>
            <person name="Laamanen P."/>
            <person name="Legros Y."/>
            <person name="Louis E.J."/>
            <person name="Moeller-Rieker S."/>
            <person name="Monnet A."/>
            <person name="Moro M."/>
            <person name="Mueller-Auer S."/>
            <person name="Nussbaumer B."/>
            <person name="Paricio N."/>
            <person name="Paulin L."/>
            <person name="Perea J."/>
            <person name="Perez-Alonso M."/>
            <person name="Perez-Ortin J.E."/>
            <person name="Pohl T.M."/>
            <person name="Prydz H."/>
            <person name="Purnelle B."/>
            <person name="Rasmussen S.W."/>
            <person name="Remacha M.A."/>
            <person name="Revuelta J.L."/>
            <person name="Rieger M."/>
            <person name="Salom D."/>
            <person name="Saluz H.P."/>
            <person name="Saiz J.E."/>
            <person name="Saren A.-M."/>
            <person name="Schaefer M."/>
            <person name="Scharfe M."/>
            <person name="Schmidt E.R."/>
            <person name="Schneider C."/>
            <person name="Scholler P."/>
            <person name="Schwarz S."/>
            <person name="Soler-Mira A."/>
            <person name="Urrestarazu L.A."/>
            <person name="Verhasselt P."/>
            <person name="Vissers S."/>
            <person name="Voet M."/>
            <person name="Volckaert G."/>
            <person name="Wagner G."/>
            <person name="Wambutt R."/>
            <person name="Wedler E."/>
            <person name="Wedler H."/>
            <person name="Woelfl S."/>
            <person name="Harris D.E."/>
            <person name="Bowman S."/>
            <person name="Brown D."/>
            <person name="Churcher C.M."/>
            <person name="Connor R."/>
            <person name="Dedman K."/>
            <person name="Gentles S."/>
            <person name="Hamlin N."/>
            <person name="Hunt S."/>
            <person name="Jones L."/>
            <person name="McDonald S."/>
            <person name="Murphy L.D."/>
            <person name="Niblett D."/>
            <person name="Odell C."/>
            <person name="Oliver K."/>
            <person name="Rajandream M.A."/>
            <person name="Richards C."/>
            <person name="Shore L."/>
            <person name="Walsh S.V."/>
            <person name="Barrell B.G."/>
            <person name="Dietrich F.S."/>
            <person name="Mulligan J.T."/>
            <person name="Allen E."/>
            <person name="Araujo R."/>
            <person name="Aviles E."/>
            <person name="Berno A."/>
            <person name="Carpenter J."/>
            <person name="Chen E."/>
            <person name="Cherry J.M."/>
            <person name="Chung E."/>
            <person name="Duncan M."/>
            <person name="Hunicke-Smith S."/>
            <person name="Hyman R.W."/>
            <person name="Komp C."/>
            <person name="Lashkari D."/>
            <person name="Lew H."/>
            <person name="Lin D."/>
            <person name="Mosedale D."/>
            <person name="Nakahara K."/>
            <person name="Namath A."/>
            <person name="Oefner P."/>
            <person name="Oh C."/>
            <person name="Petel F.X."/>
            <person name="Roberts D."/>
            <person name="Schramm S."/>
            <person name="Schroeder M."/>
            <person name="Shogren T."/>
            <person name="Shroff N."/>
            <person name="Winant A."/>
            <person name="Yelton M.A."/>
            <person name="Botstein D."/>
            <person name="Davis R.W."/>
            <person name="Johnston M."/>
            <person name="Andrews S."/>
            <person name="Brinkman R."/>
            <person name="Cooper J."/>
            <person name="Ding H."/>
            <person name="Du Z."/>
            <person name="Favello A."/>
            <person name="Fulton L."/>
            <person name="Gattung S."/>
            <person name="Greco T."/>
            <person name="Hallsworth K."/>
            <person name="Hawkins J."/>
            <person name="Hillier L.W."/>
            <person name="Jier M."/>
            <person name="Johnson D."/>
            <person name="Johnston L."/>
            <person name="Kirsten J."/>
            <person name="Kucaba T."/>
            <person name="Langston Y."/>
            <person name="Latreille P."/>
            <person name="Le T."/>
            <person name="Mardis E."/>
            <person name="Menezes S."/>
            <person name="Miller N."/>
            <person name="Nhan M."/>
            <person name="Pauley A."/>
            <person name="Peluso D."/>
            <person name="Rifkin L."/>
            <person name="Riles L."/>
            <person name="Taich A."/>
            <person name="Trevaskis E."/>
            <person name="Vignati D."/>
            <person name="Wilcox L."/>
            <person name="Wohldman P."/>
            <person name="Vaudin M."/>
            <person name="Wilson R."/>
            <person name="Waterston R."/>
            <person name="Albermann K."/>
            <person name="Hani J."/>
            <person name="Heumann K."/>
            <person name="Kleine K."/>
            <person name="Mewes H.-W."/>
            <person name="Zollner A."/>
            <person name="Zaccaria P."/>
        </authorList>
    </citation>
    <scope>NUCLEOTIDE SEQUENCE [LARGE SCALE GENOMIC DNA]</scope>
    <source>
        <strain>ATCC 204508 / S288c</strain>
    </source>
</reference>
<reference key="2">
    <citation type="journal article" date="2014" name="G3 (Bethesda)">
        <title>The reference genome sequence of Saccharomyces cerevisiae: Then and now.</title>
        <authorList>
            <person name="Engel S.R."/>
            <person name="Dietrich F.S."/>
            <person name="Fisk D.G."/>
            <person name="Binkley G."/>
            <person name="Balakrishnan R."/>
            <person name="Costanzo M.C."/>
            <person name="Dwight S.S."/>
            <person name="Hitz B.C."/>
            <person name="Karra K."/>
            <person name="Nash R.S."/>
            <person name="Weng S."/>
            <person name="Wong E.D."/>
            <person name="Lloyd P."/>
            <person name="Skrzypek M.S."/>
            <person name="Miyasato S.R."/>
            <person name="Simison M."/>
            <person name="Cherry J.M."/>
        </authorList>
    </citation>
    <scope>GENOME REANNOTATION</scope>
    <source>
        <strain>ATCC 204508 / S288c</strain>
    </source>
</reference>
<reference key="3">
    <citation type="journal article" date="2003" name="Nature">
        <title>Sequencing and comparison of yeast species to identify genes and regulatory elements.</title>
        <authorList>
            <person name="Kellis M."/>
            <person name="Patterson N."/>
            <person name="Endrizzi M."/>
            <person name="Birren B.W."/>
            <person name="Lander E.S."/>
        </authorList>
    </citation>
    <scope>IDENTIFICATION OF PROBABLE INITIATION SITE</scope>
</reference>
<reference key="4">
    <citation type="journal article" date="2003" name="Nature">
        <title>Global analysis of protein localization in budding yeast.</title>
        <authorList>
            <person name="Huh W.-K."/>
            <person name="Falvo J.V."/>
            <person name="Gerke L.C."/>
            <person name="Carroll A.S."/>
            <person name="Howson R.W."/>
            <person name="Weissman J.S."/>
            <person name="O'Shea E.K."/>
        </authorList>
    </citation>
    <scope>SUBCELLULAR LOCATION [LARGE SCALE ANALYSIS]</scope>
</reference>
<reference key="5">
    <citation type="journal article" date="2003" name="Nature">
        <title>Global analysis of protein expression in yeast.</title>
        <authorList>
            <person name="Ghaemmaghami S."/>
            <person name="Huh W.-K."/>
            <person name="Bower K."/>
            <person name="Howson R.W."/>
            <person name="Belle A."/>
            <person name="Dephoure N."/>
            <person name="O'Shea E.K."/>
            <person name="Weissman J.S."/>
        </authorList>
    </citation>
    <scope>LEVEL OF PROTEIN EXPRESSION [LARGE SCALE ANALYSIS]</scope>
</reference>
<proteinExistence type="evidence at protein level"/>
<organism>
    <name type="scientific">Saccharomyces cerevisiae (strain ATCC 204508 / S288c)</name>
    <name type="common">Baker's yeast</name>
    <dbReference type="NCBI Taxonomy" id="559292"/>
    <lineage>
        <taxon>Eukaryota</taxon>
        <taxon>Fungi</taxon>
        <taxon>Dikarya</taxon>
        <taxon>Ascomycota</taxon>
        <taxon>Saccharomycotina</taxon>
        <taxon>Saccharomycetes</taxon>
        <taxon>Saccharomycetales</taxon>
        <taxon>Saccharomycetaceae</taxon>
        <taxon>Saccharomyces</taxon>
    </lineage>
</organism>
<feature type="chain" id="PRO_0000202587" description="Uncharacterized protein YDL144C">
    <location>
        <begin position="1"/>
        <end position="356"/>
    </location>
</feature>
<accession>Q07589</accession>
<accession>D6VRK4</accession>
<comment type="subcellular location">
    <subcellularLocation>
        <location evidence="1">Cytoplasm</location>
    </subcellularLocation>
    <subcellularLocation>
        <location evidence="1">Nucleus</location>
    </subcellularLocation>
</comment>
<comment type="miscellaneous">
    <text evidence="2">Present with 5171 molecules/cell in log phase SD medium.</text>
</comment>
<comment type="sequence caution" evidence="3">
    <conflict type="erroneous initiation">
        <sequence resource="EMBL-CDS" id="CAA98717"/>
    </conflict>
</comment>
<evidence type="ECO:0000269" key="1">
    <source>
    </source>
</evidence>
<evidence type="ECO:0000269" key="2">
    <source>
    </source>
</evidence>
<evidence type="ECO:0000305" key="3"/>
<keyword id="KW-0963">Cytoplasm</keyword>
<keyword id="KW-0539">Nucleus</keyword>
<keyword id="KW-1185">Reference proteome</keyword>
<name>YD144_YEAST</name>
<protein>
    <recommendedName>
        <fullName>Uncharacterized protein YDL144C</fullName>
    </recommendedName>
</protein>
<dbReference type="EMBL" id="Z74192">
    <property type="protein sequence ID" value="CAA98717.1"/>
    <property type="status" value="ALT_INIT"/>
    <property type="molecule type" value="Genomic_DNA"/>
</dbReference>
<dbReference type="EMBL" id="BK006938">
    <property type="protein sequence ID" value="DAA11714.1"/>
    <property type="molecule type" value="Genomic_DNA"/>
</dbReference>
<dbReference type="PIR" id="S67691">
    <property type="entry name" value="S67691"/>
</dbReference>
<dbReference type="RefSeq" id="NP_010137.2">
    <property type="nucleotide sequence ID" value="NM_001180204.1"/>
</dbReference>
<dbReference type="SMR" id="Q07589"/>
<dbReference type="BioGRID" id="31917">
    <property type="interactions" value="41"/>
</dbReference>
<dbReference type="DIP" id="DIP-1632N"/>
<dbReference type="FunCoup" id="Q07589">
    <property type="interactions" value="63"/>
</dbReference>
<dbReference type="IntAct" id="Q07589">
    <property type="interactions" value="5"/>
</dbReference>
<dbReference type="MINT" id="Q07589"/>
<dbReference type="STRING" id="4932.YDL144C"/>
<dbReference type="PaxDb" id="4932-YDL144C"/>
<dbReference type="PeptideAtlas" id="Q07589"/>
<dbReference type="EnsemblFungi" id="YDL144C_mRNA">
    <property type="protein sequence ID" value="YDL144C"/>
    <property type="gene ID" value="YDL144C"/>
</dbReference>
<dbReference type="GeneID" id="851411"/>
<dbReference type="KEGG" id="sce:YDL144C"/>
<dbReference type="AGR" id="SGD:S000002303"/>
<dbReference type="SGD" id="S000002303">
    <property type="gene designation" value="YDL144C"/>
</dbReference>
<dbReference type="VEuPathDB" id="FungiDB:YDL144C"/>
<dbReference type="eggNOG" id="ENOG502QWBM">
    <property type="taxonomic scope" value="Eukaryota"/>
</dbReference>
<dbReference type="GeneTree" id="ENSGT00940000176320"/>
<dbReference type="HOGENOM" id="CLU_031468_2_1_1"/>
<dbReference type="InParanoid" id="Q07589"/>
<dbReference type="OMA" id="MCAITQL"/>
<dbReference type="OrthoDB" id="3609at2759"/>
<dbReference type="BioCyc" id="YEAST:G3O-29541-MONOMER"/>
<dbReference type="BioGRID-ORCS" id="851411">
    <property type="hits" value="8 hits in 10 CRISPR screens"/>
</dbReference>
<dbReference type="PRO" id="PR:Q07589"/>
<dbReference type="Proteomes" id="UP000002311">
    <property type="component" value="Chromosome IV"/>
</dbReference>
<dbReference type="RNAct" id="Q07589">
    <property type="molecule type" value="protein"/>
</dbReference>
<dbReference type="GO" id="GO:0005737">
    <property type="term" value="C:cytoplasm"/>
    <property type="evidence" value="ECO:0007005"/>
    <property type="project" value="SGD"/>
</dbReference>
<dbReference type="GO" id="GO:0005634">
    <property type="term" value="C:nucleus"/>
    <property type="evidence" value="ECO:0007005"/>
    <property type="project" value="SGD"/>
</dbReference>
<dbReference type="FunFam" id="1.10.1040.10:FF:000017">
    <property type="entry name" value="2-dehydropantoate 2-reductase"/>
    <property type="match status" value="1"/>
</dbReference>
<dbReference type="Gene3D" id="1.10.1040.10">
    <property type="entry name" value="N-(1-d-carboxylethyl)-l-norvaline Dehydrogenase, domain 2"/>
    <property type="match status" value="1"/>
</dbReference>
<dbReference type="Gene3D" id="3.40.50.720">
    <property type="entry name" value="NAD(P)-binding Rossmann-like Domain"/>
    <property type="match status" value="1"/>
</dbReference>
<dbReference type="InterPro" id="IPR008927">
    <property type="entry name" value="6-PGluconate_DH-like_C_sf"/>
</dbReference>
<dbReference type="InterPro" id="IPR013328">
    <property type="entry name" value="6PGD_dom2"/>
</dbReference>
<dbReference type="InterPro" id="IPR013752">
    <property type="entry name" value="KPA_reductase"/>
</dbReference>
<dbReference type="InterPro" id="IPR051402">
    <property type="entry name" value="KPR-Related"/>
</dbReference>
<dbReference type="InterPro" id="IPR013332">
    <property type="entry name" value="KPR_N"/>
</dbReference>
<dbReference type="InterPro" id="IPR036291">
    <property type="entry name" value="NAD(P)-bd_dom_sf"/>
</dbReference>
<dbReference type="PANTHER" id="PTHR21708:SF30">
    <property type="entry name" value="2-DEHYDROPANTOATE 2-REDUCTASE-RELATED"/>
    <property type="match status" value="1"/>
</dbReference>
<dbReference type="PANTHER" id="PTHR21708">
    <property type="entry name" value="PROBABLE 2-DEHYDROPANTOATE 2-REDUCTASE"/>
    <property type="match status" value="1"/>
</dbReference>
<dbReference type="Pfam" id="PF02558">
    <property type="entry name" value="ApbA"/>
    <property type="match status" value="1"/>
</dbReference>
<dbReference type="Pfam" id="PF08546">
    <property type="entry name" value="ApbA_C"/>
    <property type="match status" value="1"/>
</dbReference>
<dbReference type="SUPFAM" id="SSF48179">
    <property type="entry name" value="6-phosphogluconate dehydrogenase C-terminal domain-like"/>
    <property type="match status" value="1"/>
</dbReference>
<dbReference type="SUPFAM" id="SSF51735">
    <property type="entry name" value="NAD(P)-binding Rossmann-fold domains"/>
    <property type="match status" value="1"/>
</dbReference>
<sequence length="356" mass="39783">MSRILVIGAGGVGVITALSLWLKKESDVSLVVRSDYDRVLKHGYTIESCDYGRLEGWRPHHIYSSVEDAASAADNQGYNYIVVTTKNIIDGPVNSRVSNIIRPVLEKNKELHGPQLTTHILLVQNGIDIEKEIWAEFPREQYRYTVLSGIQLIGSTKIGSGHISQVGQDHLSCGAFDPQDAAAIQAANDFVRMYSNEGQNFVEFDPRVRYSRWKKLLYNAAINTSTALVGLDVPRCLEFGVNKKSTEIEVFHPAMREIIAIAASEGIIIEEEFITMFTEITRKKVFKPSMCVDCEKGQLMELEVILGNPIRIAKRNGVATPTLSILYNLLVLVQAKLKERKGLLKFDEKTATLVDE</sequence>
<gene>
    <name type="ordered locus">YDL144C</name>
</gene>